<proteinExistence type="evidence at protein level"/>
<protein>
    <recommendedName>
        <fullName evidence="10">Beta carbonic anhydrase 1, chloroplastic</fullName>
        <shortName>AtbCA1</shortName>
        <shortName>AtbetaCA1</shortName>
        <ecNumber evidence="2">4.2.1.1</ecNumber>
    </recommendedName>
    <alternativeName>
        <fullName>Beta carbonate dehydratase 1</fullName>
    </alternativeName>
    <alternativeName>
        <fullName>Protein SALICYLIC ACID-BINDING PROTEIN 3</fullName>
        <shortName>AtSABP3</shortName>
    </alternativeName>
</protein>
<sequence>MSTAPLSGFFLTSLSPSQSSLQKLSLRTSSTVACLPPASSSSSSSSSSSSRSVPTLIRNEPVFAAPAPIIAPYWSEEMGTEAYDEAIEALKKLLIEKEELKTVAAAKVEQITAALQTGTSSDKKAFDPVETIKQGFIKFKKEKYETNPALYGELAKGQSPKYMVFACSDSRVCPSHVLDFQPGDAFVVRNIANMVPPFDKVKYGGVGAAIEYAVLHLKVENIVVIGHSACGGIKGLMSFPLDGNNSTDFIEDWVKICLPAKSKVISELGDSAFEDQCGRCEREAVNVSLANLLTYPFVREGLVKGTLALKGGYYDFVKGAFELWGLEFGLSETSSVKDVATILHWKL</sequence>
<gene>
    <name evidence="10" type="primary">BCA1</name>
    <name evidence="11" type="synonym">CA1</name>
    <name type="synonym">SABP3</name>
    <name evidence="15" type="ordered locus">At3g01500</name>
    <name evidence="16" type="ORF">F4P13.5</name>
</gene>
<evidence type="ECO:0000250" key="1">
    <source>
        <dbReference type="UniProtKB" id="P42737"/>
    </source>
</evidence>
<evidence type="ECO:0000255" key="2">
    <source>
        <dbReference type="RuleBase" id="RU003956"/>
    </source>
</evidence>
<evidence type="ECO:0000269" key="3">
    <source>
    </source>
</evidence>
<evidence type="ECO:0000269" key="4">
    <source>
    </source>
</evidence>
<evidence type="ECO:0000269" key="5">
    <source>
    </source>
</evidence>
<evidence type="ECO:0000269" key="6">
    <source>
    </source>
</evidence>
<evidence type="ECO:0000269" key="7">
    <source>
    </source>
</evidence>
<evidence type="ECO:0000303" key="8">
    <source>
    </source>
</evidence>
<evidence type="ECO:0000303" key="9">
    <source>
    </source>
</evidence>
<evidence type="ECO:0000303" key="10">
    <source>
    </source>
</evidence>
<evidence type="ECO:0000303" key="11">
    <source>
    </source>
</evidence>
<evidence type="ECO:0000303" key="12">
    <source>
    </source>
</evidence>
<evidence type="ECO:0000303" key="13">
    <source ref="6"/>
</evidence>
<evidence type="ECO:0000305" key="14"/>
<evidence type="ECO:0000312" key="15">
    <source>
        <dbReference type="Araport" id="AT3G01500"/>
    </source>
</evidence>
<evidence type="ECO:0000312" key="16">
    <source>
        <dbReference type="EMBL" id="CAA46508.1"/>
    </source>
</evidence>
<evidence type="ECO:0007744" key="17">
    <source>
    </source>
</evidence>
<evidence type="ECO:0007744" key="18">
    <source>
    </source>
</evidence>
<name>BCA1_ARATH</name>
<organism>
    <name type="scientific">Arabidopsis thaliana</name>
    <name type="common">Mouse-ear cress</name>
    <dbReference type="NCBI Taxonomy" id="3702"/>
    <lineage>
        <taxon>Eukaryota</taxon>
        <taxon>Viridiplantae</taxon>
        <taxon>Streptophyta</taxon>
        <taxon>Embryophyta</taxon>
        <taxon>Tracheophyta</taxon>
        <taxon>Spermatophyta</taxon>
        <taxon>Magnoliopsida</taxon>
        <taxon>eudicotyledons</taxon>
        <taxon>Gunneridae</taxon>
        <taxon>Pentapetalae</taxon>
        <taxon>rosids</taxon>
        <taxon>malvids</taxon>
        <taxon>Brassicales</taxon>
        <taxon>Brassicaceae</taxon>
        <taxon>Camelineae</taxon>
        <taxon>Arabidopsis</taxon>
    </lineage>
</organism>
<keyword id="KW-0007">Acetylation</keyword>
<keyword id="KW-0025">Alternative splicing</keyword>
<keyword id="KW-1003">Cell membrane</keyword>
<keyword id="KW-0150">Chloroplast</keyword>
<keyword id="KW-0456">Lyase</keyword>
<keyword id="KW-0472">Membrane</keyword>
<keyword id="KW-0597">Phosphoprotein</keyword>
<keyword id="KW-0934">Plastid</keyword>
<keyword id="KW-1185">Reference proteome</keyword>
<keyword id="KW-0702">S-nitrosylation</keyword>
<keyword id="KW-0809">Transit peptide</keyword>
<keyword id="KW-0862">Zinc</keyword>
<reference key="1">
    <citation type="journal article" date="1992" name="Plant Mol. Biol.">
        <title>Arabidopsis thaliana carbonic anhydrase: cDNA sequence and effect of CO2 on mRNA levels.</title>
        <authorList>
            <person name="Raines C."/>
            <person name="Horsnell P.R."/>
            <person name="Holder C."/>
            <person name="Lloyd J.C."/>
        </authorList>
    </citation>
    <scope>NUCLEOTIDE SEQUENCE [MRNA] (ISOFORM 2)</scope>
    <source>
        <strain>cv. C24</strain>
        <tissue>Leaf</tissue>
    </source>
</reference>
<reference key="2">
    <citation type="journal article" date="1994" name="Plant Physiol.">
        <title>Characterization and expression of two cDNAs encoding carbonic anhydrase in Arabidopsis thaliana.</title>
        <authorList>
            <person name="Fett J.P."/>
            <person name="Coleman J.R."/>
        </authorList>
    </citation>
    <scope>NUCLEOTIDE SEQUENCE [MRNA] (ISOFORM 2)</scope>
    <source>
        <strain>cv. Columbia</strain>
    </source>
</reference>
<reference key="3">
    <citation type="journal article" date="2000" name="Nature">
        <title>Sequence and analysis of chromosome 3 of the plant Arabidopsis thaliana.</title>
        <authorList>
            <person name="Salanoubat M."/>
            <person name="Lemcke K."/>
            <person name="Rieger M."/>
            <person name="Ansorge W."/>
            <person name="Unseld M."/>
            <person name="Fartmann B."/>
            <person name="Valle G."/>
            <person name="Bloecker H."/>
            <person name="Perez-Alonso M."/>
            <person name="Obermaier B."/>
            <person name="Delseny M."/>
            <person name="Boutry M."/>
            <person name="Grivell L.A."/>
            <person name="Mache R."/>
            <person name="Puigdomenech P."/>
            <person name="De Simone V."/>
            <person name="Choisne N."/>
            <person name="Artiguenave F."/>
            <person name="Robert C."/>
            <person name="Brottier P."/>
            <person name="Wincker P."/>
            <person name="Cattolico L."/>
            <person name="Weissenbach J."/>
            <person name="Saurin W."/>
            <person name="Quetier F."/>
            <person name="Schaefer M."/>
            <person name="Mueller-Auer S."/>
            <person name="Gabel C."/>
            <person name="Fuchs M."/>
            <person name="Benes V."/>
            <person name="Wurmbach E."/>
            <person name="Drzonek H."/>
            <person name="Erfle H."/>
            <person name="Jordan N."/>
            <person name="Bangert S."/>
            <person name="Wiedelmann R."/>
            <person name="Kranz H."/>
            <person name="Voss H."/>
            <person name="Holland R."/>
            <person name="Brandt P."/>
            <person name="Nyakatura G."/>
            <person name="Vezzi A."/>
            <person name="D'Angelo M."/>
            <person name="Pallavicini A."/>
            <person name="Toppo S."/>
            <person name="Simionati B."/>
            <person name="Conrad A."/>
            <person name="Hornischer K."/>
            <person name="Kauer G."/>
            <person name="Loehnert T.-H."/>
            <person name="Nordsiek G."/>
            <person name="Reichelt J."/>
            <person name="Scharfe M."/>
            <person name="Schoen O."/>
            <person name="Bargues M."/>
            <person name="Terol J."/>
            <person name="Climent J."/>
            <person name="Navarro P."/>
            <person name="Collado C."/>
            <person name="Perez-Perez A."/>
            <person name="Ottenwaelder B."/>
            <person name="Duchemin D."/>
            <person name="Cooke R."/>
            <person name="Laudie M."/>
            <person name="Berger-Llauro C."/>
            <person name="Purnelle B."/>
            <person name="Masuy D."/>
            <person name="de Haan M."/>
            <person name="Maarse A.C."/>
            <person name="Alcaraz J.-P."/>
            <person name="Cottet A."/>
            <person name="Casacuberta E."/>
            <person name="Monfort A."/>
            <person name="Argiriou A."/>
            <person name="Flores M."/>
            <person name="Liguori R."/>
            <person name="Vitale D."/>
            <person name="Mannhaupt G."/>
            <person name="Haase D."/>
            <person name="Schoof H."/>
            <person name="Rudd S."/>
            <person name="Zaccaria P."/>
            <person name="Mewes H.-W."/>
            <person name="Mayer K.F.X."/>
            <person name="Kaul S."/>
            <person name="Town C.D."/>
            <person name="Koo H.L."/>
            <person name="Tallon L.J."/>
            <person name="Jenkins J."/>
            <person name="Rooney T."/>
            <person name="Rizzo M."/>
            <person name="Walts A."/>
            <person name="Utterback T."/>
            <person name="Fujii C.Y."/>
            <person name="Shea T.P."/>
            <person name="Creasy T.H."/>
            <person name="Haas B."/>
            <person name="Maiti R."/>
            <person name="Wu D."/>
            <person name="Peterson J."/>
            <person name="Van Aken S."/>
            <person name="Pai G."/>
            <person name="Militscher J."/>
            <person name="Sellers P."/>
            <person name="Gill J.E."/>
            <person name="Feldblyum T.V."/>
            <person name="Preuss D."/>
            <person name="Lin X."/>
            <person name="Nierman W.C."/>
            <person name="Salzberg S.L."/>
            <person name="White O."/>
            <person name="Venter J.C."/>
            <person name="Fraser C.M."/>
            <person name="Kaneko T."/>
            <person name="Nakamura Y."/>
            <person name="Sato S."/>
            <person name="Kato T."/>
            <person name="Asamizu E."/>
            <person name="Sasamoto S."/>
            <person name="Kimura T."/>
            <person name="Idesawa K."/>
            <person name="Kawashima K."/>
            <person name="Kishida Y."/>
            <person name="Kiyokawa C."/>
            <person name="Kohara M."/>
            <person name="Matsumoto M."/>
            <person name="Matsuno A."/>
            <person name="Muraki A."/>
            <person name="Nakayama S."/>
            <person name="Nakazaki N."/>
            <person name="Shinpo S."/>
            <person name="Takeuchi C."/>
            <person name="Wada T."/>
            <person name="Watanabe A."/>
            <person name="Yamada M."/>
            <person name="Yasuda M."/>
            <person name="Tabata S."/>
        </authorList>
    </citation>
    <scope>NUCLEOTIDE SEQUENCE [LARGE SCALE GENOMIC DNA]</scope>
    <source>
        <strain>cv. Columbia</strain>
    </source>
</reference>
<reference key="4">
    <citation type="journal article" date="2017" name="Plant J.">
        <title>Araport11: a complete reannotation of the Arabidopsis thaliana reference genome.</title>
        <authorList>
            <person name="Cheng C.Y."/>
            <person name="Krishnakumar V."/>
            <person name="Chan A.P."/>
            <person name="Thibaud-Nissen F."/>
            <person name="Schobel S."/>
            <person name="Town C.D."/>
        </authorList>
    </citation>
    <scope>GENOME REANNOTATION</scope>
    <source>
        <strain>cv. Columbia</strain>
    </source>
</reference>
<reference key="5">
    <citation type="journal article" date="2003" name="Science">
        <title>Empirical analysis of transcriptional activity in the Arabidopsis genome.</title>
        <authorList>
            <person name="Yamada K."/>
            <person name="Lim J."/>
            <person name="Dale J.M."/>
            <person name="Chen H."/>
            <person name="Shinn P."/>
            <person name="Palm C.J."/>
            <person name="Southwick A.M."/>
            <person name="Wu H.C."/>
            <person name="Kim C.J."/>
            <person name="Nguyen M."/>
            <person name="Pham P.K."/>
            <person name="Cheuk R.F."/>
            <person name="Karlin-Newmann G."/>
            <person name="Liu S.X."/>
            <person name="Lam B."/>
            <person name="Sakano H."/>
            <person name="Wu T."/>
            <person name="Yu G."/>
            <person name="Miranda M."/>
            <person name="Quach H.L."/>
            <person name="Tripp M."/>
            <person name="Chang C.H."/>
            <person name="Lee J.M."/>
            <person name="Toriumi M.J."/>
            <person name="Chan M.M."/>
            <person name="Tang C.C."/>
            <person name="Onodera C.S."/>
            <person name="Deng J.M."/>
            <person name="Akiyama K."/>
            <person name="Ansari Y."/>
            <person name="Arakawa T."/>
            <person name="Banh J."/>
            <person name="Banno F."/>
            <person name="Bowser L."/>
            <person name="Brooks S.Y."/>
            <person name="Carninci P."/>
            <person name="Chao Q."/>
            <person name="Choy N."/>
            <person name="Enju A."/>
            <person name="Goldsmith A.D."/>
            <person name="Gurjal M."/>
            <person name="Hansen N.F."/>
            <person name="Hayashizaki Y."/>
            <person name="Johnson-Hopson C."/>
            <person name="Hsuan V.W."/>
            <person name="Iida K."/>
            <person name="Karnes M."/>
            <person name="Khan S."/>
            <person name="Koesema E."/>
            <person name="Ishida J."/>
            <person name="Jiang P.X."/>
            <person name="Jones T."/>
            <person name="Kawai J."/>
            <person name="Kamiya A."/>
            <person name="Meyers C."/>
            <person name="Nakajima M."/>
            <person name="Narusaka M."/>
            <person name="Seki M."/>
            <person name="Sakurai T."/>
            <person name="Satou M."/>
            <person name="Tamse R."/>
            <person name="Vaysberg M."/>
            <person name="Wallender E.K."/>
            <person name="Wong C."/>
            <person name="Yamamura Y."/>
            <person name="Yuan S."/>
            <person name="Shinozaki K."/>
            <person name="Davis R.W."/>
            <person name="Theologis A."/>
            <person name="Ecker J.R."/>
        </authorList>
    </citation>
    <scope>NUCLEOTIDE SEQUENCE [LARGE SCALE MRNA] (ISOFORMS 1; 2 AND 3)</scope>
    <source>
        <strain>cv. Columbia</strain>
    </source>
</reference>
<reference key="6">
    <citation type="submission" date="2006-07" db="EMBL/GenBank/DDBJ databases">
        <title>Large-scale analysis of RIKEN Arabidopsis full-length (RAFL) cDNAs.</title>
        <authorList>
            <person name="Totoki Y."/>
            <person name="Seki M."/>
            <person name="Ishida J."/>
            <person name="Nakajima M."/>
            <person name="Enju A."/>
            <person name="Kamiya A."/>
            <person name="Narusaka M."/>
            <person name="Shin-i T."/>
            <person name="Nakagawa M."/>
            <person name="Sakamoto N."/>
            <person name="Oishi K."/>
            <person name="Kohara Y."/>
            <person name="Kobayashi M."/>
            <person name="Toyoda A."/>
            <person name="Sakaki Y."/>
            <person name="Sakurai T."/>
            <person name="Iida K."/>
            <person name="Akiyama K."/>
            <person name="Satou M."/>
            <person name="Toyoda T."/>
            <person name="Konagaya A."/>
            <person name="Carninci P."/>
            <person name="Kawai J."/>
            <person name="Hayashizaki Y."/>
            <person name="Shinozaki K."/>
        </authorList>
    </citation>
    <scope>NUCLEOTIDE SEQUENCE [LARGE SCALE MRNA] (ISOFORM 2)</scope>
    <source>
        <strain>cv. Columbia</strain>
    </source>
</reference>
<reference key="7">
    <citation type="journal article" date="2007" name="Plant Cell Environ.">
        <title>Characterization and expression analysis of genes encoding alpha and beta carbonic anhydrases in Arabidopsis.</title>
        <authorList>
            <person name="Fabre N."/>
            <person name="Reiter I.M."/>
            <person name="Becuwe-Linka N."/>
            <person name="Genty B."/>
            <person name="Rumeau D."/>
        </authorList>
    </citation>
    <scope>TISSUE SPECIFICITY</scope>
    <scope>SUBCELLULAR LOCATION</scope>
    <scope>GENE FAMILY</scope>
    <scope>NOMENCLATURE</scope>
    <source>
        <strain>cv. Columbia</strain>
    </source>
</reference>
<reference key="8">
    <citation type="journal article" date="2008" name="Plant Physiol.">
        <title>Reduction of plastid-localized carbonic anhydrase activity results in reduced Arabidopsis seedling survivorship.</title>
        <authorList>
            <person name="Ferreira F.J."/>
            <person name="Guo C."/>
            <person name="Coleman J.R."/>
        </authorList>
    </citation>
    <scope>FUNCTION</scope>
    <scope>DISRUPTION PHENOTYPE</scope>
</reference>
<reference key="9">
    <citation type="journal article" date="2009" name="J. Biol. Chem.">
        <title>S-nitrosylation of AtSABP3 antagonizes the expression of plant immunity.</title>
        <authorList>
            <person name="Wang Y.Q."/>
            <person name="Feechan A."/>
            <person name="Yun B.W."/>
            <person name="Shafiei R."/>
            <person name="Hofmann A."/>
            <person name="Taylor P."/>
            <person name="Xue P."/>
            <person name="Yang F.Q."/>
            <person name="Xie Z.S."/>
            <person name="Pallas J.A."/>
            <person name="Chu C.C."/>
            <person name="Loake G.J."/>
        </authorList>
    </citation>
    <scope>FUNCTION</scope>
    <scope>S-NITROSYLATION AT CYS-280</scope>
    <scope>3D-STRUCTURE MODELING</scope>
    <scope>MUTAGENESIS OF CYS-280</scope>
    <scope>SALICYLIC ACID-BINDING</scope>
    <scope>DISRUPTION PHENOTYPE</scope>
</reference>
<reference key="10">
    <citation type="journal article" date="2009" name="Plant Physiol.">
        <title>Large-scale Arabidopsis phosphoproteome profiling reveals novel chloroplast kinase substrates and phosphorylation networks.</title>
        <authorList>
            <person name="Reiland S."/>
            <person name="Messerli G."/>
            <person name="Baerenfaller K."/>
            <person name="Gerrits B."/>
            <person name="Endler A."/>
            <person name="Grossmann J."/>
            <person name="Gruissem W."/>
            <person name="Baginsky S."/>
        </authorList>
    </citation>
    <scope>IDENTIFICATION BY MASS SPECTROMETRY [LARGE SCALE ANALYSIS]</scope>
</reference>
<reference key="11">
    <citation type="journal article" date="2010" name="Nat. Cell Biol.">
        <title>Carbonic anhydrases are upstream regulators of CO2-controlled stomatal movements in guard cells.</title>
        <authorList>
            <person name="Hu H."/>
            <person name="Boisson-Dernier A."/>
            <person name="Israelsson-Nordstrom M."/>
            <person name="Bohmer M."/>
            <person name="Xue S."/>
            <person name="Ries A."/>
            <person name="Godoski J."/>
            <person name="Kuhn J.M."/>
            <person name="Schroeder J.I."/>
        </authorList>
    </citation>
    <scope>FUNCTION</scope>
    <scope>DISRUPTION PHENOTYPE</scope>
    <scope>TISSUE SPECIFICITY</scope>
    <scope>SUBCELLULAR LOCATION</scope>
</reference>
<reference key="12">
    <citation type="journal article" date="2012" name="J. Proteome Res.">
        <title>Identification of phosphoproteins in Arabidopsis thaliana leaves using polyethylene glycol fractionation, immobilized metal-ion affinity chromatography, two-dimensional gel electrophoresis and mass spectrometry.</title>
        <authorList>
            <person name="Aryal U.K."/>
            <person name="Krochko J.E."/>
            <person name="Ross A.R."/>
        </authorList>
    </citation>
    <scope>PHOSPHORYLATION [LARGE SCALE ANALYSIS] AT TYR-203 AND SER-266</scope>
    <scope>IDENTIFICATION BY MASS SPECTROMETRY [LARGE SCALE ANALYSIS]</scope>
</reference>
<reference key="13">
    <citation type="journal article" date="2012" name="Mol. Cell. Proteomics">
        <title>Comparative large-scale characterisation of plant vs. mammal proteins reveals similar and idiosyncratic N-alpha acetylation features.</title>
        <authorList>
            <person name="Bienvenut W.V."/>
            <person name="Sumpton D."/>
            <person name="Martinez A."/>
            <person name="Lilla S."/>
            <person name="Espagne C."/>
            <person name="Meinnel T."/>
            <person name="Giglione C."/>
        </authorList>
    </citation>
    <scope>ACETYLATION [LARGE SCALE ANALYSIS] AT ALA-114</scope>
    <scope>CLEAVAGE OF TRANSIT PEPTIDE [LARGE SCALE ANALYSIS] AFTER ALA-113</scope>
    <scope>IDENTIFICATION BY MASS SPECTROMETRY [LARGE SCALE ANALYSIS]</scope>
</reference>
<reference key="14">
    <citation type="journal article" date="2014" name="Nature">
        <title>Carbonic anhydrases, EPF2 and a novel protease mediate CO2 control of stomatal development.</title>
        <authorList>
            <person name="Engineer C.B."/>
            <person name="Ghassemian M."/>
            <person name="Anderson J.C."/>
            <person name="Peck S.C."/>
            <person name="Hu H."/>
            <person name="Schroeder J.I."/>
        </authorList>
    </citation>
    <scope>FUNCTION</scope>
</reference>
<comment type="function">
    <text evidence="4 5 6 7">Reversible hydration of carbon dioxide. Required for photosynthesis in cotyledons. Binds salicylic acid. Together with BCA4, involved in the CO(2) signaling pathway which controls gas-exchange between plants and the atmosphere by modulating stomatal development and movements. Promotes water use efficiency.</text>
</comment>
<comment type="catalytic activity">
    <reaction evidence="2">
        <text>hydrogencarbonate + H(+) = CO2 + H2O</text>
        <dbReference type="Rhea" id="RHEA:10748"/>
        <dbReference type="ChEBI" id="CHEBI:15377"/>
        <dbReference type="ChEBI" id="CHEBI:15378"/>
        <dbReference type="ChEBI" id="CHEBI:16526"/>
        <dbReference type="ChEBI" id="CHEBI:17544"/>
        <dbReference type="EC" id="4.2.1.1"/>
    </reaction>
</comment>
<comment type="subunit">
    <text>Homohexamer.</text>
</comment>
<comment type="subcellular location">
    <subcellularLocation>
        <location evidence="3">Plastid</location>
        <location evidence="3">Chloroplast stroma</location>
    </subcellularLocation>
    <subcellularLocation>
        <location evidence="6">Cell membrane</location>
        <topology evidence="6">Peripheral membrane protein</topology>
    </subcellularLocation>
</comment>
<comment type="alternative products">
    <event type="alternative splicing"/>
    <isoform>
        <id>P27140-1</id>
        <name>1</name>
        <sequence type="displayed"/>
    </isoform>
    <isoform>
        <id>P27140-2</id>
        <name>2</name>
        <sequence type="described" ref="VSP_009004"/>
    </isoform>
    <isoform>
        <id>P27140-3</id>
        <name>3</name>
        <sequence type="described" ref="VSP_009003"/>
    </isoform>
</comment>
<comment type="tissue specificity">
    <text evidence="3 6">Strongly expressed in aerial tissues including leaves, stems, flowers and siliques. Accumulates in both guard cells and mesophyll cells.</text>
</comment>
<comment type="induction">
    <text>Expression reduced by 70% under dark conditions.</text>
</comment>
<comment type="PTM">
    <text evidence="5">S-nitrosylation at Cys-280 is up-regulated during nitrosative burst and suppresses both binding of salicylic acid and carbonic anhydrase activity. S-nitrosylated in response to an avirulent but not to a virulent bacterial strain.</text>
</comment>
<comment type="disruption phenotype">
    <text evidence="4 5 6">Reduced levels of seedling establishment associated with altered cotyledon photosynthetic performance at the onset of phototrophic growth and prior to the development of true leaves. These phenotypes are reversed in high CO(2) or sucrose supplemented conditions. Decreased resistance against avirulent bacteria. In plants lacking both BCA1 and BCA4, impaired CO(2)-regulation of stomatal movements associated with reduced beta carbonic anhydrase activity in guard cells, and increased stomatal density.</text>
</comment>
<comment type="similarity">
    <text evidence="14">Belongs to the beta-class carbonic anhydrase family.</text>
</comment>
<comment type="sequence caution" evidence="14">
    <conflict type="erroneous initiation">
        <sequence resource="EMBL-CDS" id="BAD94771"/>
    </conflict>
    <text>Truncated N-terminus.</text>
</comment>
<feature type="transit peptide" description="Chloroplast" evidence="14 18">
    <location>
        <begin position="1"/>
        <end position="113"/>
    </location>
</feature>
<feature type="chain" id="PRO_0000004267" description="Beta carbonic anhydrase 1, chloroplastic">
    <location>
        <begin position="114"/>
        <end position="347"/>
    </location>
</feature>
<feature type="modified residue" description="N-acetylalanine" evidence="18">
    <location>
        <position position="114"/>
    </location>
</feature>
<feature type="modified residue" description="Phosphoserine" evidence="1">
    <location>
        <position position="175"/>
    </location>
</feature>
<feature type="modified residue" description="Phosphotyrosine" evidence="17">
    <location>
        <position position="203"/>
    </location>
</feature>
<feature type="modified residue" description="Phosphoserine" evidence="17">
    <location>
        <position position="266"/>
    </location>
</feature>
<feature type="modified residue" description="S-nitrosocysteine" evidence="5">
    <location>
        <position position="280"/>
    </location>
</feature>
<feature type="splice variant" id="VSP_009003" description="In isoform 3." evidence="8">
    <location>
        <begin position="1"/>
        <end position="77"/>
    </location>
</feature>
<feature type="splice variant" id="VSP_009004" description="In isoform 2." evidence="8 9 12 13">
    <location>
        <begin position="337"/>
        <end position="347"/>
    </location>
</feature>
<feature type="mutagenesis site" description="Loss of nitrosylation and decreased carbonic anhydrase activity, but no effect on salicylic acid binding." evidence="5">
    <original>C</original>
    <variation>S</variation>
    <location>
        <position position="280"/>
    </location>
</feature>
<accession>P27140</accession>
<accession>Q0WWA9</accession>
<accession>Q56WK1</accession>
<accession>Q8RWW2</accession>
<accession>Q93VR8</accession>
<dbReference type="EC" id="4.2.1.1" evidence="2"/>
<dbReference type="EMBL" id="X65541">
    <property type="protein sequence ID" value="CAA46508.1"/>
    <property type="molecule type" value="mRNA"/>
</dbReference>
<dbReference type="EMBL" id="AC009325">
    <property type="protein sequence ID" value="AAF01535.1"/>
    <property type="molecule type" value="Genomic_DNA"/>
</dbReference>
<dbReference type="EMBL" id="CP002686">
    <property type="protein sequence ID" value="AEE73675.1"/>
    <property type="molecule type" value="Genomic_DNA"/>
</dbReference>
<dbReference type="EMBL" id="CP002686">
    <property type="protein sequence ID" value="AEE73676.1"/>
    <property type="molecule type" value="Genomic_DNA"/>
</dbReference>
<dbReference type="EMBL" id="CP002686">
    <property type="protein sequence ID" value="AEE73677.1"/>
    <property type="molecule type" value="Genomic_DNA"/>
</dbReference>
<dbReference type="EMBL" id="AF428284">
    <property type="protein sequence ID" value="AAL16116.1"/>
    <property type="molecule type" value="mRNA"/>
</dbReference>
<dbReference type="EMBL" id="AF428459">
    <property type="protein sequence ID" value="AAL16228.1"/>
    <property type="molecule type" value="mRNA"/>
</dbReference>
<dbReference type="EMBL" id="AY056175">
    <property type="protein sequence ID" value="AAL07024.1"/>
    <property type="molecule type" value="mRNA"/>
</dbReference>
<dbReference type="EMBL" id="AY062785">
    <property type="protein sequence ID" value="AAL32863.1"/>
    <property type="molecule type" value="mRNA"/>
</dbReference>
<dbReference type="EMBL" id="AY081658">
    <property type="protein sequence ID" value="AAM10220.1"/>
    <property type="molecule type" value="mRNA"/>
</dbReference>
<dbReference type="EMBL" id="AY091066">
    <property type="protein sequence ID" value="AAM13886.1"/>
    <property type="molecule type" value="mRNA"/>
</dbReference>
<dbReference type="EMBL" id="AK226447">
    <property type="protein sequence ID" value="BAE98589.1"/>
    <property type="molecule type" value="mRNA"/>
</dbReference>
<dbReference type="EMBL" id="AK222039">
    <property type="protein sequence ID" value="BAD94771.1"/>
    <property type="status" value="ALT_INIT"/>
    <property type="molecule type" value="mRNA"/>
</dbReference>
<dbReference type="PIR" id="S28412">
    <property type="entry name" value="S28412"/>
</dbReference>
<dbReference type="RefSeq" id="NP_186799.2">
    <molecule id="P27140-1"/>
    <property type="nucleotide sequence ID" value="NM_111016.4"/>
</dbReference>
<dbReference type="RefSeq" id="NP_850490.1">
    <molecule id="P27140-3"/>
    <property type="nucleotide sequence ID" value="NM_180159.2"/>
</dbReference>
<dbReference type="RefSeq" id="NP_850491.1">
    <molecule id="P27140-2"/>
    <property type="nucleotide sequence ID" value="NM_180160.4"/>
</dbReference>
<dbReference type="SMR" id="P27140"/>
<dbReference type="BioGRID" id="6467">
    <property type="interactions" value="16"/>
</dbReference>
<dbReference type="FunCoup" id="P27140">
    <property type="interactions" value="1655"/>
</dbReference>
<dbReference type="IntAct" id="P27140">
    <property type="interactions" value="11"/>
</dbReference>
<dbReference type="STRING" id="3702.P27140"/>
<dbReference type="iPTMnet" id="P27140"/>
<dbReference type="PaxDb" id="3702-AT3G01500.2"/>
<dbReference type="ProteomicsDB" id="240719">
    <molecule id="P27140-1"/>
</dbReference>
<dbReference type="EnsemblPlants" id="AT3G01500.1">
    <molecule id="P27140-3"/>
    <property type="protein sequence ID" value="AT3G01500.1"/>
    <property type="gene ID" value="AT3G01500"/>
</dbReference>
<dbReference type="EnsemblPlants" id="AT3G01500.2">
    <molecule id="P27140-1"/>
    <property type="protein sequence ID" value="AT3G01500.2"/>
    <property type="gene ID" value="AT3G01500"/>
</dbReference>
<dbReference type="EnsemblPlants" id="AT3G01500.3">
    <molecule id="P27140-2"/>
    <property type="protein sequence ID" value="AT3G01500.3"/>
    <property type="gene ID" value="AT3G01500"/>
</dbReference>
<dbReference type="GeneID" id="821134"/>
<dbReference type="Gramene" id="AT3G01500.1">
    <molecule id="P27140-3"/>
    <property type="protein sequence ID" value="AT3G01500.1"/>
    <property type="gene ID" value="AT3G01500"/>
</dbReference>
<dbReference type="Gramene" id="AT3G01500.2">
    <molecule id="P27140-1"/>
    <property type="protein sequence ID" value="AT3G01500.2"/>
    <property type="gene ID" value="AT3G01500"/>
</dbReference>
<dbReference type="Gramene" id="AT3G01500.3">
    <molecule id="P27140-2"/>
    <property type="protein sequence ID" value="AT3G01500.3"/>
    <property type="gene ID" value="AT3G01500"/>
</dbReference>
<dbReference type="KEGG" id="ath:AT3G01500"/>
<dbReference type="Araport" id="AT3G01500"/>
<dbReference type="TAIR" id="AT3G01500">
    <property type="gene designation" value="CA1"/>
</dbReference>
<dbReference type="eggNOG" id="KOG1578">
    <property type="taxonomic scope" value="Eukaryota"/>
</dbReference>
<dbReference type="InParanoid" id="P27140"/>
<dbReference type="OrthoDB" id="10248475at2759"/>
<dbReference type="PhylomeDB" id="P27140"/>
<dbReference type="BioCyc" id="ARA:AT3G01500-MONOMER"/>
<dbReference type="BioCyc" id="MetaCyc:AT3G01500-MONOMER"/>
<dbReference type="CD-CODE" id="4299E36E">
    <property type="entry name" value="Nucleolus"/>
</dbReference>
<dbReference type="PRO" id="PR:P27140"/>
<dbReference type="Proteomes" id="UP000006548">
    <property type="component" value="Chromosome 3"/>
</dbReference>
<dbReference type="ExpressionAtlas" id="P27140">
    <property type="expression patterns" value="baseline and differential"/>
</dbReference>
<dbReference type="GO" id="GO:0048046">
    <property type="term" value="C:apoplast"/>
    <property type="evidence" value="ECO:0007005"/>
    <property type="project" value="TAIR"/>
</dbReference>
<dbReference type="GO" id="GO:0009507">
    <property type="term" value="C:chloroplast"/>
    <property type="evidence" value="ECO:0000314"/>
    <property type="project" value="UniProtKB"/>
</dbReference>
<dbReference type="GO" id="GO:0009941">
    <property type="term" value="C:chloroplast envelope"/>
    <property type="evidence" value="ECO:0007005"/>
    <property type="project" value="TAIR"/>
</dbReference>
<dbReference type="GO" id="GO:0009570">
    <property type="term" value="C:chloroplast stroma"/>
    <property type="evidence" value="ECO:0007005"/>
    <property type="project" value="TAIR"/>
</dbReference>
<dbReference type="GO" id="GO:0009535">
    <property type="term" value="C:chloroplast thylakoid membrane"/>
    <property type="evidence" value="ECO:0007005"/>
    <property type="project" value="TAIR"/>
</dbReference>
<dbReference type="GO" id="GO:0005829">
    <property type="term" value="C:cytosol"/>
    <property type="evidence" value="ECO:0007005"/>
    <property type="project" value="TAIR"/>
</dbReference>
<dbReference type="GO" id="GO:0005886">
    <property type="term" value="C:plasma membrane"/>
    <property type="evidence" value="ECO:0000314"/>
    <property type="project" value="UniProtKB"/>
</dbReference>
<dbReference type="GO" id="GO:0010319">
    <property type="term" value="C:stromule"/>
    <property type="evidence" value="ECO:0000314"/>
    <property type="project" value="TAIR"/>
</dbReference>
<dbReference type="GO" id="GO:0009579">
    <property type="term" value="C:thylakoid"/>
    <property type="evidence" value="ECO:0007005"/>
    <property type="project" value="TAIR"/>
</dbReference>
<dbReference type="GO" id="GO:0004089">
    <property type="term" value="F:carbonate dehydratase activity"/>
    <property type="evidence" value="ECO:0000315"/>
    <property type="project" value="UniProtKB"/>
</dbReference>
<dbReference type="GO" id="GO:0003729">
    <property type="term" value="F:mRNA binding"/>
    <property type="evidence" value="ECO:0000314"/>
    <property type="project" value="TAIR"/>
</dbReference>
<dbReference type="GO" id="GO:0008270">
    <property type="term" value="F:zinc ion binding"/>
    <property type="evidence" value="ECO:0007669"/>
    <property type="project" value="InterPro"/>
</dbReference>
<dbReference type="GO" id="GO:0015976">
    <property type="term" value="P:carbon utilization"/>
    <property type="evidence" value="ECO:0007669"/>
    <property type="project" value="InterPro"/>
</dbReference>
<dbReference type="GO" id="GO:0050832">
    <property type="term" value="P:defense response to fungus"/>
    <property type="evidence" value="ECO:0000314"/>
    <property type="project" value="TAIR"/>
</dbReference>
<dbReference type="GO" id="GO:2000122">
    <property type="term" value="P:negative regulation of stomatal complex development"/>
    <property type="evidence" value="ECO:0000316"/>
    <property type="project" value="TAIR"/>
</dbReference>
<dbReference type="GO" id="GO:0015979">
    <property type="term" value="P:photosynthesis"/>
    <property type="evidence" value="ECO:0000315"/>
    <property type="project" value="UniProtKB"/>
</dbReference>
<dbReference type="GO" id="GO:0010119">
    <property type="term" value="P:regulation of stomatal movement"/>
    <property type="evidence" value="ECO:0000316"/>
    <property type="project" value="TAIR"/>
</dbReference>
<dbReference type="GO" id="GO:0010037">
    <property type="term" value="P:response to carbon dioxide"/>
    <property type="evidence" value="ECO:0000316"/>
    <property type="project" value="TAIR"/>
</dbReference>
<dbReference type="GO" id="GO:0009409">
    <property type="term" value="P:response to cold"/>
    <property type="evidence" value="ECO:0000270"/>
    <property type="project" value="TAIR"/>
</dbReference>
<dbReference type="CDD" id="cd00884">
    <property type="entry name" value="beta_CA_cladeB"/>
    <property type="match status" value="1"/>
</dbReference>
<dbReference type="FunFam" id="3.40.1050.10:FF:000002">
    <property type="entry name" value="Carbonic anhydrase"/>
    <property type="match status" value="1"/>
</dbReference>
<dbReference type="Gene3D" id="3.40.1050.10">
    <property type="entry name" value="Carbonic anhydrase"/>
    <property type="match status" value="1"/>
</dbReference>
<dbReference type="InterPro" id="IPR045066">
    <property type="entry name" value="Beta_CA_cladeB"/>
</dbReference>
<dbReference type="InterPro" id="IPR001765">
    <property type="entry name" value="Carbonic_anhydrase"/>
</dbReference>
<dbReference type="InterPro" id="IPR015892">
    <property type="entry name" value="Carbonic_anhydrase_CS"/>
</dbReference>
<dbReference type="InterPro" id="IPR036874">
    <property type="entry name" value="Carbonic_anhydrase_sf"/>
</dbReference>
<dbReference type="PANTHER" id="PTHR11002:SF46">
    <property type="entry name" value="BETA CARBONIC ANHYDRASE 1, CHLOROPLASTIC"/>
    <property type="match status" value="1"/>
</dbReference>
<dbReference type="PANTHER" id="PTHR11002">
    <property type="entry name" value="CARBONIC ANHYDRASE"/>
    <property type="match status" value="1"/>
</dbReference>
<dbReference type="Pfam" id="PF00484">
    <property type="entry name" value="Pro_CA"/>
    <property type="match status" value="1"/>
</dbReference>
<dbReference type="SMART" id="SM00947">
    <property type="entry name" value="Pro_CA"/>
    <property type="match status" value="1"/>
</dbReference>
<dbReference type="SUPFAM" id="SSF53056">
    <property type="entry name" value="beta-carbonic anhydrase, cab"/>
    <property type="match status" value="1"/>
</dbReference>
<dbReference type="PROSITE" id="PS00704">
    <property type="entry name" value="PROK_CO2_ANHYDRASE_1"/>
    <property type="match status" value="1"/>
</dbReference>
<dbReference type="PROSITE" id="PS00705">
    <property type="entry name" value="PROK_CO2_ANHYDRASE_2"/>
    <property type="match status" value="1"/>
</dbReference>